<feature type="chain" id="PRO_0000218342" description="Virulence plasmid protein pGP3-D">
    <location>
        <begin position="1"/>
        <end position="264"/>
    </location>
</feature>
<feature type="sequence conflict" description="In Ref. 1; CAA55376." evidence="1" ref="1">
    <original>Q</original>
    <variation>H</variation>
    <location>
        <position position="189"/>
    </location>
</feature>
<protein>
    <recommendedName>
        <fullName>Virulence plasmid protein pGP3-D</fullName>
    </recommendedName>
</protein>
<evidence type="ECO:0000305" key="1"/>
<keyword id="KW-0614">Plasmid</keyword>
<name>GP3D_CHLMU</name>
<dbReference type="EMBL" id="X78726">
    <property type="protein sequence ID" value="CAA55376.1"/>
    <property type="molecule type" value="Genomic_DNA"/>
</dbReference>
<dbReference type="EMBL" id="AE002162">
    <property type="protein sequence ID" value="AAF39719.1"/>
    <property type="status" value="ALT_INIT"/>
    <property type="molecule type" value="Genomic_DNA"/>
</dbReference>
<dbReference type="PIR" id="S44163">
    <property type="entry name" value="S44163"/>
</dbReference>
<dbReference type="SMR" id="Q46439"/>
<dbReference type="GeneID" id="1245520"/>
<dbReference type="KEGG" id="cmu:TC_A04"/>
<dbReference type="PATRIC" id="fig|243161.6.peg.5"/>
<dbReference type="HOGENOM" id="CLU_1052509_0_0_0"/>
<dbReference type="OrthoDB" id="17580at2"/>
<dbReference type="PHI-base" id="PHI:10305"/>
<dbReference type="PHI-base" id="PHI:4927"/>
<dbReference type="PHI-base" id="PHI:8916"/>
<dbReference type="PHI-base" id="PHI:9854"/>
<dbReference type="Proteomes" id="UP000000800">
    <property type="component" value="Plasmid pMoPn"/>
</dbReference>
<dbReference type="Gene3D" id="2.60.120.1340">
    <property type="match status" value="1"/>
</dbReference>
<dbReference type="Gene3D" id="6.10.250.3190">
    <property type="match status" value="1"/>
</dbReference>
<dbReference type="Gene3D" id="6.20.30.20">
    <property type="match status" value="1"/>
</dbReference>
<dbReference type="InterPro" id="IPR008444">
    <property type="entry name" value="Chlamydia_pGP3"/>
</dbReference>
<dbReference type="InterPro" id="IPR049000">
    <property type="entry name" value="PGP3-D_N"/>
</dbReference>
<dbReference type="InterPro" id="IPR033758">
    <property type="entry name" value="pGP3_C"/>
</dbReference>
<dbReference type="Pfam" id="PF05475">
    <property type="entry name" value="Chlam_vir"/>
    <property type="match status" value="1"/>
</dbReference>
<dbReference type="Pfam" id="PF20857">
    <property type="entry name" value="Pgp3_helical"/>
    <property type="match status" value="1"/>
</dbReference>
<dbReference type="Pfam" id="PF20858">
    <property type="entry name" value="Pgp3_N"/>
    <property type="match status" value="1"/>
</dbReference>
<dbReference type="PIRSF" id="PIRSF016070">
    <property type="entry name" value="Chlamydia_vir"/>
    <property type="match status" value="1"/>
</dbReference>
<accession>Q46439</accession>
<accession>Q9PLU6</accession>
<reference key="1">
    <citation type="journal article" date="1997" name="Microbiology">
        <title>Plasmid diversity in Chlamydia.</title>
        <authorList>
            <person name="Thomas N.S."/>
            <person name="Lusher M."/>
            <person name="Storey C.C."/>
            <person name="Clarke I.N."/>
        </authorList>
    </citation>
    <scope>NUCLEOTIDE SEQUENCE [GENOMIC DNA]</scope>
    <source>
        <strain>MoPn / Nigg</strain>
    </source>
</reference>
<reference key="2">
    <citation type="journal article" date="2000" name="Nucleic Acids Res.">
        <title>Genome sequences of Chlamydia trachomatis MoPn and Chlamydia pneumoniae AR39.</title>
        <authorList>
            <person name="Read T.D."/>
            <person name="Brunham R.C."/>
            <person name="Shen C."/>
            <person name="Gill S.R."/>
            <person name="Heidelberg J.F."/>
            <person name="White O."/>
            <person name="Hickey E.K."/>
            <person name="Peterson J.D."/>
            <person name="Utterback T.R."/>
            <person name="Berry K.J."/>
            <person name="Bass S."/>
            <person name="Linher K.D."/>
            <person name="Weidman J.F."/>
            <person name="Khouri H.M."/>
            <person name="Craven B."/>
            <person name="Bowman C."/>
            <person name="Dodson R.J."/>
            <person name="Gwinn M.L."/>
            <person name="Nelson W.C."/>
            <person name="DeBoy R.T."/>
            <person name="Kolonay J.F."/>
            <person name="McClarty G."/>
            <person name="Salzberg S.L."/>
            <person name="Eisen J.A."/>
            <person name="Fraser C.M."/>
        </authorList>
    </citation>
    <scope>NUCLEOTIDE SEQUENCE [LARGE SCALE GENOMIC DNA]</scope>
    <source>
        <strain>MoPn / Nigg</strain>
    </source>
</reference>
<gene>
    <name type="ordered locus">TC_A04</name>
</gene>
<sequence>MGNSGFYLHNTSNCVFADNIKVGQMTEPLTDQQIILGTSTTPVAAKITASEGISLTITNNAQANSSVNIGLDAEKAYQLILDKLGDQIFDGITGSIVESAVQDIIDKITSDPSLGLLKAFYNFQITGKIQCNGLFTSSNVTTLLGGTEIGRFTVTPRSSGSMFLVSADIIASRMEGGVVLALVKEGDTQPCAISYGYSSGVPNLCSLKTCVTNSGSTPTTYSLRIGGLESGVVWVNALSNGNDILGITNTSNVSFLEVIPQKNT</sequence>
<organism>
    <name type="scientific">Chlamydia muridarum (strain MoPn / Nigg)</name>
    <dbReference type="NCBI Taxonomy" id="243161"/>
    <lineage>
        <taxon>Bacteria</taxon>
        <taxon>Pseudomonadati</taxon>
        <taxon>Chlamydiota</taxon>
        <taxon>Chlamydiia</taxon>
        <taxon>Chlamydiales</taxon>
        <taxon>Chlamydiaceae</taxon>
        <taxon>Chlamydia/Chlamydophila group</taxon>
        <taxon>Chlamydia</taxon>
    </lineage>
</organism>
<proteinExistence type="predicted"/>
<geneLocation type="plasmid">
    <name>pMoPn</name>
</geneLocation>
<comment type="sequence caution" evidence="1">
    <conflict type="erroneous initiation">
        <sequence resource="EMBL-CDS" id="AAF39719"/>
    </conflict>
</comment>